<reference key="1">
    <citation type="submission" date="2005-11" db="EMBL/GenBank/DDBJ databases">
        <authorList>
            <consortium name="NIH - Mammalian Gene Collection (MGC) project"/>
        </authorList>
    </citation>
    <scope>NUCLEOTIDE SEQUENCE [LARGE SCALE MRNA]</scope>
    <source>
        <strain>Crossbred X Angus</strain>
        <tissue>Liver</tissue>
    </source>
</reference>
<organism>
    <name type="scientific">Bos taurus</name>
    <name type="common">Bovine</name>
    <dbReference type="NCBI Taxonomy" id="9913"/>
    <lineage>
        <taxon>Eukaryota</taxon>
        <taxon>Metazoa</taxon>
        <taxon>Chordata</taxon>
        <taxon>Craniata</taxon>
        <taxon>Vertebrata</taxon>
        <taxon>Euteleostomi</taxon>
        <taxon>Mammalia</taxon>
        <taxon>Eutheria</taxon>
        <taxon>Laurasiatheria</taxon>
        <taxon>Artiodactyla</taxon>
        <taxon>Ruminantia</taxon>
        <taxon>Pecora</taxon>
        <taxon>Bovidae</taxon>
        <taxon>Bovinae</taxon>
        <taxon>Bos</taxon>
    </lineage>
</organism>
<sequence length="509" mass="54930">MAAIGVHLGCTSACVAVYKDGRADVVANDAGDRVTPAIVAYSKNEEVVGLAAKQSRIRNISNTVMKVKQILGRSSDDPQSRKYITESKCLVIEKNGKLLYEIDTGEEKKFVSPEDVARLIFSKMKETAHSVLGSDANDVVITVPFDFGEKQKSALGEAARAAGFNVLRLIHEPSAALLAYGIGQDSPTGKSNILVFKLGGTSLSISVMEVNSGIYRVLSTNTDNNIGGTHFTETLAQYLASEFQRSFRHDVRGNARAMMKLMNGADTAKHSLSTLGSANCFLDSLYEGQDFDCNVSRARFELLCSPLFNKCIEAIREVLEQSGFTADDINKVVLCGGSSRIPRLQQMIRDLFPAVELLNSIPPDEVIPIGAAIEAGILIGKESLSVEDALQIECSAKDILVKGVDESGANSFKVLFPSGTPLPARRQHTLQAPGSISSVCLELYESEGKNSAKVENKFAQVVLQDLDKKENGLRDILAVLTMKRDGSLHVTCTDQETGKCEAITIEVAS</sequence>
<accession>Q2YDD0</accession>
<evidence type="ECO:0000250" key="1"/>
<evidence type="ECO:0000305" key="2"/>
<gene>
    <name type="primary">HSPA14</name>
</gene>
<keyword id="KW-0067">ATP-binding</keyword>
<keyword id="KW-0143">Chaperone</keyword>
<keyword id="KW-0963">Cytoplasm</keyword>
<keyword id="KW-0547">Nucleotide-binding</keyword>
<keyword id="KW-1185">Reference proteome</keyword>
<feature type="chain" id="PRO_0000289945" description="Heat shock 70 kDa protein 14">
    <location>
        <begin position="1"/>
        <end position="509"/>
    </location>
</feature>
<name>HSP7E_BOVIN</name>
<protein>
    <recommendedName>
        <fullName>Heat shock 70 kDa protein 14</fullName>
    </recommendedName>
</protein>
<dbReference type="EMBL" id="BC110281">
    <property type="protein sequence ID" value="AAI10282.1"/>
    <property type="molecule type" value="mRNA"/>
</dbReference>
<dbReference type="RefSeq" id="NP_001039853.1">
    <property type="nucleotide sequence ID" value="NM_001046388.2"/>
</dbReference>
<dbReference type="SMR" id="Q2YDD0"/>
<dbReference type="FunCoup" id="Q2YDD0">
    <property type="interactions" value="3245"/>
</dbReference>
<dbReference type="STRING" id="9913.ENSBTAP00000054501"/>
<dbReference type="PaxDb" id="9913-ENSBTAP00000021872"/>
<dbReference type="GeneID" id="534751"/>
<dbReference type="KEGG" id="bta:534751"/>
<dbReference type="CTD" id="51182"/>
<dbReference type="VEuPathDB" id="HostDB:ENSBTAG00000016451"/>
<dbReference type="eggNOG" id="KOG0101">
    <property type="taxonomic scope" value="Eukaryota"/>
</dbReference>
<dbReference type="HOGENOM" id="CLU_005965_0_3_1"/>
<dbReference type="InParanoid" id="Q2YDD0"/>
<dbReference type="OMA" id="DQVLMDH"/>
<dbReference type="OrthoDB" id="29851at2759"/>
<dbReference type="TreeFam" id="TF105045"/>
<dbReference type="Reactome" id="R-BTA-3371453">
    <property type="pathway name" value="Regulation of HSF1-mediated heat shock response"/>
</dbReference>
<dbReference type="PRO" id="PR:Q2YDD0"/>
<dbReference type="Proteomes" id="UP000009136">
    <property type="component" value="Chromosome 13"/>
</dbReference>
<dbReference type="Bgee" id="ENSBTAG00000016451">
    <property type="expression patterns" value="Expressed in oocyte and 107 other cell types or tissues"/>
</dbReference>
<dbReference type="GO" id="GO:0005737">
    <property type="term" value="C:cytoplasm"/>
    <property type="evidence" value="ECO:0000318"/>
    <property type="project" value="GO_Central"/>
</dbReference>
<dbReference type="GO" id="GO:0005829">
    <property type="term" value="C:cytosol"/>
    <property type="evidence" value="ECO:0000250"/>
    <property type="project" value="UniProtKB"/>
</dbReference>
<dbReference type="GO" id="GO:0005634">
    <property type="term" value="C:nucleus"/>
    <property type="evidence" value="ECO:0000318"/>
    <property type="project" value="GO_Central"/>
</dbReference>
<dbReference type="GO" id="GO:0005886">
    <property type="term" value="C:plasma membrane"/>
    <property type="evidence" value="ECO:0000318"/>
    <property type="project" value="GO_Central"/>
</dbReference>
<dbReference type="GO" id="GO:0005524">
    <property type="term" value="F:ATP binding"/>
    <property type="evidence" value="ECO:0007669"/>
    <property type="project" value="UniProtKB-KW"/>
</dbReference>
<dbReference type="GO" id="GO:0016887">
    <property type="term" value="F:ATP hydrolysis activity"/>
    <property type="evidence" value="ECO:0000318"/>
    <property type="project" value="GO_Central"/>
</dbReference>
<dbReference type="GO" id="GO:0140662">
    <property type="term" value="F:ATP-dependent protein folding chaperone"/>
    <property type="evidence" value="ECO:0007669"/>
    <property type="project" value="InterPro"/>
</dbReference>
<dbReference type="GO" id="GO:0031072">
    <property type="term" value="F:heat shock protein binding"/>
    <property type="evidence" value="ECO:0000318"/>
    <property type="project" value="GO_Central"/>
</dbReference>
<dbReference type="GO" id="GO:0044183">
    <property type="term" value="F:protein folding chaperone"/>
    <property type="evidence" value="ECO:0000318"/>
    <property type="project" value="GO_Central"/>
</dbReference>
<dbReference type="GO" id="GO:0051085">
    <property type="term" value="P:chaperone cofactor-dependent protein refolding"/>
    <property type="evidence" value="ECO:0000318"/>
    <property type="project" value="GO_Central"/>
</dbReference>
<dbReference type="GO" id="GO:0042026">
    <property type="term" value="P:protein refolding"/>
    <property type="evidence" value="ECO:0000318"/>
    <property type="project" value="GO_Central"/>
</dbReference>
<dbReference type="CDD" id="cd10238">
    <property type="entry name" value="ASKHA_NBD_HSP70_HSPA14"/>
    <property type="match status" value="1"/>
</dbReference>
<dbReference type="FunFam" id="2.60.34.10:FF:000013">
    <property type="entry name" value="Heat shock 70 kDa protein 14"/>
    <property type="match status" value="1"/>
</dbReference>
<dbReference type="FunFam" id="3.30.30.30:FF:000008">
    <property type="entry name" value="heat shock 70 kDa protein 14"/>
    <property type="match status" value="1"/>
</dbReference>
<dbReference type="FunFam" id="3.90.640.10:FF:000010">
    <property type="entry name" value="heat shock 70 kDa protein 14"/>
    <property type="match status" value="1"/>
</dbReference>
<dbReference type="FunFam" id="3.30.420.40:FF:000171">
    <property type="entry name" value="Heat shock 70 kDa protein 4"/>
    <property type="match status" value="1"/>
</dbReference>
<dbReference type="FunFam" id="3.30.420.40:FF:000433">
    <property type="entry name" value="Heat shock protein family A (Hsp70) member 14"/>
    <property type="match status" value="1"/>
</dbReference>
<dbReference type="Gene3D" id="3.30.30.30">
    <property type="match status" value="1"/>
</dbReference>
<dbReference type="Gene3D" id="3.30.420.40">
    <property type="match status" value="2"/>
</dbReference>
<dbReference type="Gene3D" id="3.90.640.10">
    <property type="entry name" value="Actin, Chain A, domain 4"/>
    <property type="match status" value="1"/>
</dbReference>
<dbReference type="Gene3D" id="2.60.34.10">
    <property type="entry name" value="Substrate Binding Domain Of DNAk, Chain A, domain 1"/>
    <property type="match status" value="1"/>
</dbReference>
<dbReference type="InterPro" id="IPR043129">
    <property type="entry name" value="ATPase_NBD"/>
</dbReference>
<dbReference type="InterPro" id="IPR018181">
    <property type="entry name" value="Heat_shock_70_CS"/>
</dbReference>
<dbReference type="InterPro" id="IPR029047">
    <property type="entry name" value="HSP70_peptide-bd_sf"/>
</dbReference>
<dbReference type="InterPro" id="IPR013126">
    <property type="entry name" value="Hsp_70_fam"/>
</dbReference>
<dbReference type="InterPro" id="IPR042049">
    <property type="entry name" value="HSPA14_NBD"/>
</dbReference>
<dbReference type="PANTHER" id="PTHR19375">
    <property type="entry name" value="HEAT SHOCK PROTEIN 70KDA"/>
    <property type="match status" value="1"/>
</dbReference>
<dbReference type="Pfam" id="PF00012">
    <property type="entry name" value="HSP70"/>
    <property type="match status" value="1"/>
</dbReference>
<dbReference type="PRINTS" id="PR00301">
    <property type="entry name" value="HEATSHOCK70"/>
</dbReference>
<dbReference type="SUPFAM" id="SSF53067">
    <property type="entry name" value="Actin-like ATPase domain"/>
    <property type="match status" value="2"/>
</dbReference>
<dbReference type="SUPFAM" id="SSF100920">
    <property type="entry name" value="Heat shock protein 70kD (HSP70), peptide-binding domain"/>
    <property type="match status" value="1"/>
</dbReference>
<dbReference type="PROSITE" id="PS01036">
    <property type="entry name" value="HSP70_3"/>
    <property type="match status" value="1"/>
</dbReference>
<comment type="function">
    <text evidence="1">Component of the ribosome-associated complex (RAC), a complex involved in folding or maintaining nascent polypeptides in a folding-competent state. In the RAC complex, binds to the nascent polypeptide chain, while DNAJC2 stimulates its ATPase activity (By similarity).</text>
</comment>
<comment type="subunit">
    <text evidence="1">Component of ribosome-associated complex (RAC), a heterodimer composed of Hsp70/DnaK-type chaperone HSPA14 and Hsp40/DnaJ-type chaperone DNAJC2.</text>
</comment>
<comment type="subcellular location">
    <subcellularLocation>
        <location evidence="1">Cytoplasm</location>
        <location evidence="1">Cytosol</location>
    </subcellularLocation>
</comment>
<comment type="similarity">
    <text evidence="2">Belongs to the heat shock protein 70 family.</text>
</comment>
<proteinExistence type="evidence at transcript level"/>